<gene>
    <name evidence="6" type="primary">brlA</name>
</gene>
<sequence length="376" mass="42535">MEDGFGMYSHSMSCPSTASTSFSSASSSAYDPFTPSSRRSTPNELSLDLDGSCSYAAHQHSLELTPPTTSMAKYFMGQTIKQEPEQMSFGSLPTTPMKKVDGGFAAEYDLIDMNMASHHSMGTITPSNSFGLHTISPETAMGPTSYMMTPTQSLSGSEIAESSSSWSVTNESPINFFQQPKDLSFHDMDSLDLDERHHHHHNHHQHHHAQQSPMGQHFQLHSNTGASPNSMRVQRKMMLHEAQRKTSELQRAQIRESRKRAGKPESGAVDVVRRAMCKCDYPGCNKAFRRNEHLKRHKQTFHGEGPNRFSCEFCGKDQFNRQDNLNNHRKLHARPNSRNRGVEFIPEAVPIIEHEERSRKRRAPPKSKAEKRDYDF</sequence>
<organism>
    <name type="scientific">Hapsidospora chrysogena</name>
    <name type="common">Acremonium chrysogenum</name>
    <dbReference type="NCBI Taxonomy" id="5044"/>
    <lineage>
        <taxon>Eukaryota</taxon>
        <taxon>Fungi</taxon>
        <taxon>Dikarya</taxon>
        <taxon>Ascomycota</taxon>
        <taxon>Pezizomycotina</taxon>
        <taxon>Sordariomycetes</taxon>
        <taxon>Hypocreomycetidae</taxon>
        <taxon>Hypocreales</taxon>
        <taxon>Bionectriaceae</taxon>
        <taxon>Hapsidospora</taxon>
    </lineage>
</organism>
<feature type="chain" id="PRO_0000435950" description="C2H2 type master regulator of conidiophore development brlA">
    <location>
        <begin position="1"/>
        <end position="376"/>
    </location>
</feature>
<feature type="zinc finger region" description="C2H2-type 1; degenerate" evidence="3">
    <location>
        <begin position="277"/>
        <end position="301"/>
    </location>
</feature>
<feature type="zinc finger region" description="C2H2-type 2" evidence="3">
    <location>
        <begin position="309"/>
        <end position="332"/>
    </location>
</feature>
<feature type="region of interest" description="Disordered" evidence="4">
    <location>
        <begin position="20"/>
        <end position="47"/>
    </location>
</feature>
<feature type="region of interest" description="Disordered" evidence="4">
    <location>
        <begin position="197"/>
        <end position="229"/>
    </location>
</feature>
<feature type="region of interest" description="Disordered" evidence="4">
    <location>
        <begin position="241"/>
        <end position="267"/>
    </location>
</feature>
<feature type="region of interest" description="Disordered" evidence="4">
    <location>
        <begin position="351"/>
        <end position="376"/>
    </location>
</feature>
<feature type="compositionally biased region" description="Low complexity" evidence="4">
    <location>
        <begin position="20"/>
        <end position="29"/>
    </location>
</feature>
<feature type="compositionally biased region" description="Polar residues" evidence="4">
    <location>
        <begin position="34"/>
        <end position="44"/>
    </location>
</feature>
<feature type="compositionally biased region" description="Basic residues" evidence="4">
    <location>
        <begin position="197"/>
        <end position="209"/>
    </location>
</feature>
<feature type="compositionally biased region" description="Polar residues" evidence="4">
    <location>
        <begin position="219"/>
        <end position="229"/>
    </location>
</feature>
<feature type="compositionally biased region" description="Basic and acidic residues" evidence="4">
    <location>
        <begin position="241"/>
        <end position="256"/>
    </location>
</feature>
<feature type="compositionally biased region" description="Basic and acidic residues" evidence="4">
    <location>
        <begin position="367"/>
        <end position="376"/>
    </location>
</feature>
<reference key="1">
    <citation type="journal article" date="2015" name="Fungal Genet. Biol.">
        <title>AcstuA, which encodes an APSES transcription regulator, is involved in conidiation, cephalosporin biosynthesis and cell wall integrity of Acremonium chrysogenum.</title>
        <authorList>
            <person name="Hu P."/>
            <person name="Wang Y."/>
            <person name="Zhou J."/>
            <person name="Pan Y."/>
            <person name="Liu G."/>
        </authorList>
    </citation>
    <scope>NUCLEOTIDE SEQUENCE [GENOMIC DNA]</scope>
    <scope>INDUCTION</scope>
    <scope>FUNCTION</scope>
    <scope>DISRUPTION PHENOTYPE</scope>
    <source>
        <strain>GMCC 3.3795</strain>
    </source>
</reference>
<proteinExistence type="evidence at transcript level"/>
<evidence type="ECO:0000250" key="1">
    <source>
        <dbReference type="UniProtKB" id="P10069"/>
    </source>
</evidence>
<evidence type="ECO:0000250" key="2">
    <source>
        <dbReference type="UniProtKB" id="P22022"/>
    </source>
</evidence>
<evidence type="ECO:0000255" key="3">
    <source>
        <dbReference type="PROSITE-ProRule" id="PRU00042"/>
    </source>
</evidence>
<evidence type="ECO:0000256" key="4">
    <source>
        <dbReference type="SAM" id="MobiDB-lite"/>
    </source>
</evidence>
<evidence type="ECO:0000269" key="5">
    <source>
    </source>
</evidence>
<evidence type="ECO:0000303" key="6">
    <source>
    </source>
</evidence>
<evidence type="ECO:0000305" key="7"/>
<accession>A0A0A7HJC7</accession>
<name>BRLA_HAPCH</name>
<protein>
    <recommendedName>
        <fullName evidence="7">C2H2 type master regulator of conidiophore development brlA</fullName>
    </recommendedName>
</protein>
<comment type="function">
    <text evidence="2 5">BrlA, abaA and wetA are pivotal regulators of conidiophore development and conidium maturation (PubMed:26283234). They act individually and together to regulate their own expression and that of numerous other sporulation-specific genes (By similarity). Binds promoters of target genes at brlA response elements (BREs) containing the conserved sequence 5'-(C/A)(A/G)AGGG(G/A)-3' (By similarity).</text>
</comment>
<comment type="subcellular location">
    <subcellularLocation>
        <location evidence="1">Nucleus</location>
    </subcellularLocation>
</comment>
<comment type="induction">
    <text evidence="5">Expression is positively regulated by stuA through direct binding of stuA to the abaA promoter region (PubMed:26283234).</text>
</comment>
<comment type="disruption phenotype">
    <text evidence="5">Abolishes conidiation (PubMed:26283234).</text>
</comment>
<keyword id="KW-0010">Activator</keyword>
<keyword id="KW-0183">Conidiation</keyword>
<keyword id="KW-0238">DNA-binding</keyword>
<keyword id="KW-0479">Metal-binding</keyword>
<keyword id="KW-0539">Nucleus</keyword>
<keyword id="KW-0677">Repeat</keyword>
<keyword id="KW-0749">Sporulation</keyword>
<keyword id="KW-0804">Transcription</keyword>
<keyword id="KW-0805">Transcription regulation</keyword>
<keyword id="KW-0862">Zinc</keyword>
<keyword id="KW-0863">Zinc-finger</keyword>
<dbReference type="EMBL" id="KM207846">
    <property type="protein sequence ID" value="AIZ05821.1"/>
    <property type="molecule type" value="Genomic_DNA"/>
</dbReference>
<dbReference type="SMR" id="A0A0A7HJC7"/>
<dbReference type="GO" id="GO:0005634">
    <property type="term" value="C:nucleus"/>
    <property type="evidence" value="ECO:0007669"/>
    <property type="project" value="UniProtKB-SubCell"/>
</dbReference>
<dbReference type="GO" id="GO:0000981">
    <property type="term" value="F:DNA-binding transcription factor activity, RNA polymerase II-specific"/>
    <property type="evidence" value="ECO:0007669"/>
    <property type="project" value="TreeGrafter"/>
</dbReference>
<dbReference type="GO" id="GO:0000978">
    <property type="term" value="F:RNA polymerase II cis-regulatory region sequence-specific DNA binding"/>
    <property type="evidence" value="ECO:0007669"/>
    <property type="project" value="TreeGrafter"/>
</dbReference>
<dbReference type="GO" id="GO:0008270">
    <property type="term" value="F:zinc ion binding"/>
    <property type="evidence" value="ECO:0007669"/>
    <property type="project" value="UniProtKB-KW"/>
</dbReference>
<dbReference type="GO" id="GO:0048315">
    <property type="term" value="P:conidium formation"/>
    <property type="evidence" value="ECO:0007669"/>
    <property type="project" value="UniProtKB-KW"/>
</dbReference>
<dbReference type="GO" id="GO:0030435">
    <property type="term" value="P:sporulation resulting in formation of a cellular spore"/>
    <property type="evidence" value="ECO:0007669"/>
    <property type="project" value="UniProtKB-KW"/>
</dbReference>
<dbReference type="Gene3D" id="3.30.160.60">
    <property type="entry name" value="Classic Zinc Finger"/>
    <property type="match status" value="2"/>
</dbReference>
<dbReference type="InterPro" id="IPR036236">
    <property type="entry name" value="Znf_C2H2_sf"/>
</dbReference>
<dbReference type="InterPro" id="IPR013087">
    <property type="entry name" value="Znf_C2H2_type"/>
</dbReference>
<dbReference type="PANTHER" id="PTHR23235:SF175">
    <property type="entry name" value="C2H2-TYPE DOMAIN-CONTAINING PROTEIN"/>
    <property type="match status" value="1"/>
</dbReference>
<dbReference type="PANTHER" id="PTHR23235">
    <property type="entry name" value="KRUEPPEL-LIKE TRANSCRIPTION FACTOR"/>
    <property type="match status" value="1"/>
</dbReference>
<dbReference type="SMART" id="SM00355">
    <property type="entry name" value="ZnF_C2H2"/>
    <property type="match status" value="2"/>
</dbReference>
<dbReference type="SUPFAM" id="SSF57667">
    <property type="entry name" value="beta-beta-alpha zinc fingers"/>
    <property type="match status" value="1"/>
</dbReference>
<dbReference type="PROSITE" id="PS00028">
    <property type="entry name" value="ZINC_FINGER_C2H2_1"/>
    <property type="match status" value="1"/>
</dbReference>
<dbReference type="PROSITE" id="PS50157">
    <property type="entry name" value="ZINC_FINGER_C2H2_2"/>
    <property type="match status" value="1"/>
</dbReference>